<sequence length="312" mass="33982">MDNNEILLANPRGFCAGVERAIEIVERALQRFGAPIYVRHEVVHNKFVVDDLRAKGAVFVEELDEVPTGNTVIFSAHGVSQAVREEADKRGLRVFDATCPLVTKVHIEVGRMREQGRELVMIGHKGHPEVEGTMGQVKDGIHLVETAADVANLQVADPDKLAYVTQTTLSVDDAAAIVTALRERFPNIMGPKKDDICYATQNRQDAVKFMTPHADVVFVVGSKNSSNSNRLREVAELRGVPAYLVDNAAGIDPAWIVGKRRIGVTAGASAPEVLVAEVIERLKALSGASVRNLDGVPEKVTFPLPKELQEAR</sequence>
<keyword id="KW-0004">4Fe-4S</keyword>
<keyword id="KW-0408">Iron</keyword>
<keyword id="KW-0411">Iron-sulfur</keyword>
<keyword id="KW-0414">Isoprene biosynthesis</keyword>
<keyword id="KW-0479">Metal-binding</keyword>
<keyword id="KW-0560">Oxidoreductase</keyword>
<keyword id="KW-1185">Reference proteome</keyword>
<evidence type="ECO:0000255" key="1">
    <source>
        <dbReference type="HAMAP-Rule" id="MF_00191"/>
    </source>
</evidence>
<organism>
    <name type="scientific">Azoarcus sp. (strain BH72)</name>
    <dbReference type="NCBI Taxonomy" id="418699"/>
    <lineage>
        <taxon>Bacteria</taxon>
        <taxon>Pseudomonadati</taxon>
        <taxon>Pseudomonadota</taxon>
        <taxon>Betaproteobacteria</taxon>
        <taxon>Rhodocyclales</taxon>
        <taxon>Zoogloeaceae</taxon>
        <taxon>Azoarcus</taxon>
    </lineage>
</organism>
<accession>A1K4R4</accession>
<name>ISPH_AZOSB</name>
<reference key="1">
    <citation type="journal article" date="2006" name="Nat. Biotechnol.">
        <title>Complete genome of the mutualistic, N2-fixing grass endophyte Azoarcus sp. strain BH72.</title>
        <authorList>
            <person name="Krause A."/>
            <person name="Ramakumar A."/>
            <person name="Bartels D."/>
            <person name="Battistoni F."/>
            <person name="Bekel T."/>
            <person name="Boch J."/>
            <person name="Boehm M."/>
            <person name="Friedrich F."/>
            <person name="Hurek T."/>
            <person name="Krause L."/>
            <person name="Linke B."/>
            <person name="McHardy A.C."/>
            <person name="Sarkar A."/>
            <person name="Schneiker S."/>
            <person name="Syed A.A."/>
            <person name="Thauer R."/>
            <person name="Vorhoelter F.-J."/>
            <person name="Weidner S."/>
            <person name="Puehler A."/>
            <person name="Reinhold-Hurek B."/>
            <person name="Kaiser O."/>
            <person name="Goesmann A."/>
        </authorList>
    </citation>
    <scope>NUCLEOTIDE SEQUENCE [LARGE SCALE GENOMIC DNA]</scope>
    <source>
        <strain>BH72</strain>
    </source>
</reference>
<dbReference type="EC" id="1.17.7.4" evidence="1"/>
<dbReference type="EMBL" id="AM406670">
    <property type="protein sequence ID" value="CAL93819.1"/>
    <property type="molecule type" value="Genomic_DNA"/>
</dbReference>
<dbReference type="RefSeq" id="WP_011764935.1">
    <property type="nucleotide sequence ID" value="NC_008702.1"/>
</dbReference>
<dbReference type="SMR" id="A1K4R4"/>
<dbReference type="STRING" id="62928.azo1202"/>
<dbReference type="KEGG" id="azo:azo1202"/>
<dbReference type="eggNOG" id="COG0761">
    <property type="taxonomic scope" value="Bacteria"/>
</dbReference>
<dbReference type="HOGENOM" id="CLU_027486_1_0_4"/>
<dbReference type="UniPathway" id="UPA00056">
    <property type="reaction ID" value="UER00097"/>
</dbReference>
<dbReference type="UniPathway" id="UPA00059">
    <property type="reaction ID" value="UER00105"/>
</dbReference>
<dbReference type="Proteomes" id="UP000002588">
    <property type="component" value="Chromosome"/>
</dbReference>
<dbReference type="GO" id="GO:0051539">
    <property type="term" value="F:4 iron, 4 sulfur cluster binding"/>
    <property type="evidence" value="ECO:0007669"/>
    <property type="project" value="UniProtKB-UniRule"/>
</dbReference>
<dbReference type="GO" id="GO:0051745">
    <property type="term" value="F:4-hydroxy-3-methylbut-2-enyl diphosphate reductase activity"/>
    <property type="evidence" value="ECO:0007669"/>
    <property type="project" value="UniProtKB-UniRule"/>
</dbReference>
<dbReference type="GO" id="GO:0046872">
    <property type="term" value="F:metal ion binding"/>
    <property type="evidence" value="ECO:0007669"/>
    <property type="project" value="UniProtKB-KW"/>
</dbReference>
<dbReference type="GO" id="GO:0050992">
    <property type="term" value="P:dimethylallyl diphosphate biosynthetic process"/>
    <property type="evidence" value="ECO:0007669"/>
    <property type="project" value="UniProtKB-UniRule"/>
</dbReference>
<dbReference type="GO" id="GO:0019288">
    <property type="term" value="P:isopentenyl diphosphate biosynthetic process, methylerythritol 4-phosphate pathway"/>
    <property type="evidence" value="ECO:0007669"/>
    <property type="project" value="UniProtKB-UniRule"/>
</dbReference>
<dbReference type="GO" id="GO:0016114">
    <property type="term" value="P:terpenoid biosynthetic process"/>
    <property type="evidence" value="ECO:0007669"/>
    <property type="project" value="UniProtKB-UniRule"/>
</dbReference>
<dbReference type="CDD" id="cd13944">
    <property type="entry name" value="lytB_ispH"/>
    <property type="match status" value="1"/>
</dbReference>
<dbReference type="Gene3D" id="3.40.50.11270">
    <property type="match status" value="1"/>
</dbReference>
<dbReference type="Gene3D" id="3.40.1010.20">
    <property type="entry name" value="4-hydroxy-3-methylbut-2-enyl diphosphate reductase, catalytic domain"/>
    <property type="match status" value="2"/>
</dbReference>
<dbReference type="HAMAP" id="MF_00191">
    <property type="entry name" value="IspH"/>
    <property type="match status" value="1"/>
</dbReference>
<dbReference type="InterPro" id="IPR003451">
    <property type="entry name" value="LytB/IspH"/>
</dbReference>
<dbReference type="NCBIfam" id="TIGR00216">
    <property type="entry name" value="ispH_lytB"/>
    <property type="match status" value="1"/>
</dbReference>
<dbReference type="NCBIfam" id="NF002188">
    <property type="entry name" value="PRK01045.1-2"/>
    <property type="match status" value="1"/>
</dbReference>
<dbReference type="NCBIfam" id="NF002190">
    <property type="entry name" value="PRK01045.1-4"/>
    <property type="match status" value="1"/>
</dbReference>
<dbReference type="PANTHER" id="PTHR30426">
    <property type="entry name" value="4-HYDROXY-3-METHYLBUT-2-ENYL DIPHOSPHATE REDUCTASE"/>
    <property type="match status" value="1"/>
</dbReference>
<dbReference type="PANTHER" id="PTHR30426:SF0">
    <property type="entry name" value="4-HYDROXY-3-METHYLBUT-2-ENYL DIPHOSPHATE REDUCTASE"/>
    <property type="match status" value="1"/>
</dbReference>
<dbReference type="Pfam" id="PF02401">
    <property type="entry name" value="LYTB"/>
    <property type="match status" value="1"/>
</dbReference>
<protein>
    <recommendedName>
        <fullName evidence="1">4-hydroxy-3-methylbut-2-enyl diphosphate reductase</fullName>
        <shortName evidence="1">HMBPP reductase</shortName>
        <ecNumber evidence="1">1.17.7.4</ecNumber>
    </recommendedName>
</protein>
<comment type="function">
    <text evidence="1">Catalyzes the conversion of 1-hydroxy-2-methyl-2-(E)-butenyl 4-diphosphate (HMBPP) into a mixture of isopentenyl diphosphate (IPP) and dimethylallyl diphosphate (DMAPP). Acts in the terminal step of the DOXP/MEP pathway for isoprenoid precursor biosynthesis.</text>
</comment>
<comment type="catalytic activity">
    <reaction evidence="1">
        <text>isopentenyl diphosphate + 2 oxidized [2Fe-2S]-[ferredoxin] + H2O = (2E)-4-hydroxy-3-methylbut-2-enyl diphosphate + 2 reduced [2Fe-2S]-[ferredoxin] + 2 H(+)</text>
        <dbReference type="Rhea" id="RHEA:24488"/>
        <dbReference type="Rhea" id="RHEA-COMP:10000"/>
        <dbReference type="Rhea" id="RHEA-COMP:10001"/>
        <dbReference type="ChEBI" id="CHEBI:15377"/>
        <dbReference type="ChEBI" id="CHEBI:15378"/>
        <dbReference type="ChEBI" id="CHEBI:33737"/>
        <dbReference type="ChEBI" id="CHEBI:33738"/>
        <dbReference type="ChEBI" id="CHEBI:128753"/>
        <dbReference type="ChEBI" id="CHEBI:128769"/>
        <dbReference type="EC" id="1.17.7.4"/>
    </reaction>
</comment>
<comment type="catalytic activity">
    <reaction evidence="1">
        <text>dimethylallyl diphosphate + 2 oxidized [2Fe-2S]-[ferredoxin] + H2O = (2E)-4-hydroxy-3-methylbut-2-enyl diphosphate + 2 reduced [2Fe-2S]-[ferredoxin] + 2 H(+)</text>
        <dbReference type="Rhea" id="RHEA:24825"/>
        <dbReference type="Rhea" id="RHEA-COMP:10000"/>
        <dbReference type="Rhea" id="RHEA-COMP:10001"/>
        <dbReference type="ChEBI" id="CHEBI:15377"/>
        <dbReference type="ChEBI" id="CHEBI:15378"/>
        <dbReference type="ChEBI" id="CHEBI:33737"/>
        <dbReference type="ChEBI" id="CHEBI:33738"/>
        <dbReference type="ChEBI" id="CHEBI:57623"/>
        <dbReference type="ChEBI" id="CHEBI:128753"/>
        <dbReference type="EC" id="1.17.7.4"/>
    </reaction>
</comment>
<comment type="cofactor">
    <cofactor evidence="1">
        <name>[4Fe-4S] cluster</name>
        <dbReference type="ChEBI" id="CHEBI:49883"/>
    </cofactor>
    <text evidence="1">Binds 1 [4Fe-4S] cluster per subunit.</text>
</comment>
<comment type="pathway">
    <text evidence="1">Isoprenoid biosynthesis; dimethylallyl diphosphate biosynthesis; dimethylallyl diphosphate from (2E)-4-hydroxy-3-methylbutenyl diphosphate: step 1/1.</text>
</comment>
<comment type="pathway">
    <text evidence="1">Isoprenoid biosynthesis; isopentenyl diphosphate biosynthesis via DXP pathway; isopentenyl diphosphate from 1-deoxy-D-xylulose 5-phosphate: step 6/6.</text>
</comment>
<comment type="similarity">
    <text evidence="1">Belongs to the IspH family.</text>
</comment>
<gene>
    <name evidence="1" type="primary">ispH</name>
    <name type="ordered locus">azo1202</name>
</gene>
<proteinExistence type="inferred from homology"/>
<feature type="chain" id="PRO_1000021085" description="4-hydroxy-3-methylbut-2-enyl diphosphate reductase">
    <location>
        <begin position="1"/>
        <end position="312"/>
    </location>
</feature>
<feature type="active site" description="Proton donor" evidence="1">
    <location>
        <position position="129"/>
    </location>
</feature>
<feature type="binding site" evidence="1">
    <location>
        <position position="15"/>
    </location>
    <ligand>
        <name>[4Fe-4S] cluster</name>
        <dbReference type="ChEBI" id="CHEBI:49883"/>
    </ligand>
</feature>
<feature type="binding site" evidence="1">
    <location>
        <position position="44"/>
    </location>
    <ligand>
        <name>(2E)-4-hydroxy-3-methylbut-2-enyl diphosphate</name>
        <dbReference type="ChEBI" id="CHEBI:128753"/>
    </ligand>
</feature>
<feature type="binding site" evidence="1">
    <location>
        <position position="44"/>
    </location>
    <ligand>
        <name>dimethylallyl diphosphate</name>
        <dbReference type="ChEBI" id="CHEBI:57623"/>
    </ligand>
</feature>
<feature type="binding site" evidence="1">
    <location>
        <position position="44"/>
    </location>
    <ligand>
        <name>isopentenyl diphosphate</name>
        <dbReference type="ChEBI" id="CHEBI:128769"/>
    </ligand>
</feature>
<feature type="binding site" evidence="1">
    <location>
        <position position="77"/>
    </location>
    <ligand>
        <name>(2E)-4-hydroxy-3-methylbut-2-enyl diphosphate</name>
        <dbReference type="ChEBI" id="CHEBI:128753"/>
    </ligand>
</feature>
<feature type="binding site" evidence="1">
    <location>
        <position position="77"/>
    </location>
    <ligand>
        <name>dimethylallyl diphosphate</name>
        <dbReference type="ChEBI" id="CHEBI:57623"/>
    </ligand>
</feature>
<feature type="binding site" evidence="1">
    <location>
        <position position="77"/>
    </location>
    <ligand>
        <name>isopentenyl diphosphate</name>
        <dbReference type="ChEBI" id="CHEBI:128769"/>
    </ligand>
</feature>
<feature type="binding site" evidence="1">
    <location>
        <position position="99"/>
    </location>
    <ligand>
        <name>[4Fe-4S] cluster</name>
        <dbReference type="ChEBI" id="CHEBI:49883"/>
    </ligand>
</feature>
<feature type="binding site" evidence="1">
    <location>
        <position position="127"/>
    </location>
    <ligand>
        <name>(2E)-4-hydroxy-3-methylbut-2-enyl diphosphate</name>
        <dbReference type="ChEBI" id="CHEBI:128753"/>
    </ligand>
</feature>
<feature type="binding site" evidence="1">
    <location>
        <position position="127"/>
    </location>
    <ligand>
        <name>dimethylallyl diphosphate</name>
        <dbReference type="ChEBI" id="CHEBI:57623"/>
    </ligand>
</feature>
<feature type="binding site" evidence="1">
    <location>
        <position position="127"/>
    </location>
    <ligand>
        <name>isopentenyl diphosphate</name>
        <dbReference type="ChEBI" id="CHEBI:128769"/>
    </ligand>
</feature>
<feature type="binding site" evidence="1">
    <location>
        <position position="167"/>
    </location>
    <ligand>
        <name>(2E)-4-hydroxy-3-methylbut-2-enyl diphosphate</name>
        <dbReference type="ChEBI" id="CHEBI:128753"/>
    </ligand>
</feature>
<feature type="binding site" evidence="1">
    <location>
        <position position="197"/>
    </location>
    <ligand>
        <name>[4Fe-4S] cluster</name>
        <dbReference type="ChEBI" id="CHEBI:49883"/>
    </ligand>
</feature>
<feature type="binding site" evidence="1">
    <location>
        <position position="225"/>
    </location>
    <ligand>
        <name>(2E)-4-hydroxy-3-methylbut-2-enyl diphosphate</name>
        <dbReference type="ChEBI" id="CHEBI:128753"/>
    </ligand>
</feature>
<feature type="binding site" evidence="1">
    <location>
        <position position="225"/>
    </location>
    <ligand>
        <name>dimethylallyl diphosphate</name>
        <dbReference type="ChEBI" id="CHEBI:57623"/>
    </ligand>
</feature>
<feature type="binding site" evidence="1">
    <location>
        <position position="225"/>
    </location>
    <ligand>
        <name>isopentenyl diphosphate</name>
        <dbReference type="ChEBI" id="CHEBI:128769"/>
    </ligand>
</feature>
<feature type="binding site" evidence="1">
    <location>
        <position position="226"/>
    </location>
    <ligand>
        <name>(2E)-4-hydroxy-3-methylbut-2-enyl diphosphate</name>
        <dbReference type="ChEBI" id="CHEBI:128753"/>
    </ligand>
</feature>
<feature type="binding site" evidence="1">
    <location>
        <position position="226"/>
    </location>
    <ligand>
        <name>dimethylallyl diphosphate</name>
        <dbReference type="ChEBI" id="CHEBI:57623"/>
    </ligand>
</feature>
<feature type="binding site" evidence="1">
    <location>
        <position position="226"/>
    </location>
    <ligand>
        <name>isopentenyl diphosphate</name>
        <dbReference type="ChEBI" id="CHEBI:128769"/>
    </ligand>
</feature>
<feature type="binding site" evidence="1">
    <location>
        <position position="227"/>
    </location>
    <ligand>
        <name>(2E)-4-hydroxy-3-methylbut-2-enyl diphosphate</name>
        <dbReference type="ChEBI" id="CHEBI:128753"/>
    </ligand>
</feature>
<feature type="binding site" evidence="1">
    <location>
        <position position="227"/>
    </location>
    <ligand>
        <name>dimethylallyl diphosphate</name>
        <dbReference type="ChEBI" id="CHEBI:57623"/>
    </ligand>
</feature>
<feature type="binding site" evidence="1">
    <location>
        <position position="227"/>
    </location>
    <ligand>
        <name>isopentenyl diphosphate</name>
        <dbReference type="ChEBI" id="CHEBI:128769"/>
    </ligand>
</feature>
<feature type="binding site" evidence="1">
    <location>
        <position position="269"/>
    </location>
    <ligand>
        <name>(2E)-4-hydroxy-3-methylbut-2-enyl diphosphate</name>
        <dbReference type="ChEBI" id="CHEBI:128753"/>
    </ligand>
</feature>
<feature type="binding site" evidence="1">
    <location>
        <position position="269"/>
    </location>
    <ligand>
        <name>dimethylallyl diphosphate</name>
        <dbReference type="ChEBI" id="CHEBI:57623"/>
    </ligand>
</feature>
<feature type="binding site" evidence="1">
    <location>
        <position position="269"/>
    </location>
    <ligand>
        <name>isopentenyl diphosphate</name>
        <dbReference type="ChEBI" id="CHEBI:128769"/>
    </ligand>
</feature>